<dbReference type="EC" id="1.3.5.1" evidence="1"/>
<dbReference type="EMBL" id="D30651">
    <property type="protein sequence ID" value="BAA21637.1"/>
    <property type="molecule type" value="mRNA"/>
</dbReference>
<dbReference type="EMBL" id="FO080313">
    <property type="protein sequence ID" value="CCD62793.1"/>
    <property type="molecule type" value="Genomic_DNA"/>
</dbReference>
<dbReference type="PIR" id="T15398">
    <property type="entry name" value="T15398"/>
</dbReference>
<dbReference type="PIR" id="T41753">
    <property type="entry name" value="T41753"/>
</dbReference>
<dbReference type="RefSeq" id="NP_509446.1">
    <property type="nucleotide sequence ID" value="NM_077045.9"/>
</dbReference>
<dbReference type="SMR" id="Q09508"/>
<dbReference type="BioGRID" id="46027">
    <property type="interactions" value="16"/>
</dbReference>
<dbReference type="FunCoup" id="Q09508">
    <property type="interactions" value="1833"/>
</dbReference>
<dbReference type="STRING" id="6239.C03G5.1.1"/>
<dbReference type="DrugCentral" id="Q09508"/>
<dbReference type="PaxDb" id="6239-C03G5.1"/>
<dbReference type="PeptideAtlas" id="Q09508"/>
<dbReference type="EnsemblMetazoa" id="C03G5.1.1">
    <property type="protein sequence ID" value="C03G5.1.1"/>
    <property type="gene ID" value="WBGene00015391"/>
</dbReference>
<dbReference type="GeneID" id="181108"/>
<dbReference type="KEGG" id="cel:CELE_C03G5.1"/>
<dbReference type="UCSC" id="C03G5.1.2">
    <property type="organism name" value="c. elegans"/>
</dbReference>
<dbReference type="AGR" id="WB:WBGene00015391"/>
<dbReference type="CTD" id="181108"/>
<dbReference type="WormBase" id="C03G5.1">
    <property type="protein sequence ID" value="CE03917"/>
    <property type="gene ID" value="WBGene00015391"/>
    <property type="gene designation" value="sdha-1"/>
</dbReference>
<dbReference type="eggNOG" id="KOG2403">
    <property type="taxonomic scope" value="Eukaryota"/>
</dbReference>
<dbReference type="GeneTree" id="ENSGT00910000144277"/>
<dbReference type="HOGENOM" id="CLU_014312_6_1_1"/>
<dbReference type="InParanoid" id="Q09508"/>
<dbReference type="OMA" id="PTGIWRM"/>
<dbReference type="OrthoDB" id="71672at2759"/>
<dbReference type="PhylomeDB" id="Q09508"/>
<dbReference type="Reactome" id="R-CEL-71403">
    <property type="pathway name" value="Citric acid cycle (TCA cycle)"/>
</dbReference>
<dbReference type="Reactome" id="R-CEL-9854311">
    <property type="pathway name" value="Maturation of TCA enzymes and regulation of TCA cycle"/>
</dbReference>
<dbReference type="UniPathway" id="UPA00223">
    <property type="reaction ID" value="UER01006"/>
</dbReference>
<dbReference type="PRO" id="PR:Q09508"/>
<dbReference type="Proteomes" id="UP000001940">
    <property type="component" value="Chromosome X"/>
</dbReference>
<dbReference type="Bgee" id="WBGene00015391">
    <property type="expression patterns" value="Expressed in pharyngeal muscle cell (C elegans) and 4 other cell types or tissues"/>
</dbReference>
<dbReference type="GO" id="GO:0005743">
    <property type="term" value="C:mitochondrial inner membrane"/>
    <property type="evidence" value="ECO:0007669"/>
    <property type="project" value="UniProtKB-SubCell"/>
</dbReference>
<dbReference type="GO" id="GO:0005739">
    <property type="term" value="C:mitochondrion"/>
    <property type="evidence" value="ECO:0007005"/>
    <property type="project" value="WormBase"/>
</dbReference>
<dbReference type="GO" id="GO:0045273">
    <property type="term" value="C:respiratory chain complex II (succinate dehydrogenase)"/>
    <property type="evidence" value="ECO:0000318"/>
    <property type="project" value="GO_Central"/>
</dbReference>
<dbReference type="GO" id="GO:0009055">
    <property type="term" value="F:electron transfer activity"/>
    <property type="evidence" value="ECO:0000318"/>
    <property type="project" value="GO_Central"/>
</dbReference>
<dbReference type="GO" id="GO:0050660">
    <property type="term" value="F:flavin adenine dinucleotide binding"/>
    <property type="evidence" value="ECO:0000318"/>
    <property type="project" value="GO_Central"/>
</dbReference>
<dbReference type="GO" id="GO:0008177">
    <property type="term" value="F:succinate dehydrogenase (quinone) activity"/>
    <property type="evidence" value="ECO:0007669"/>
    <property type="project" value="UniProtKB-EC"/>
</dbReference>
<dbReference type="GO" id="GO:0000104">
    <property type="term" value="F:succinate dehydrogenase activity"/>
    <property type="evidence" value="ECO:0000318"/>
    <property type="project" value="GO_Central"/>
</dbReference>
<dbReference type="GO" id="GO:0006121">
    <property type="term" value="P:mitochondrial electron transport, succinate to ubiquinone"/>
    <property type="evidence" value="ECO:0000318"/>
    <property type="project" value="GO_Central"/>
</dbReference>
<dbReference type="GO" id="GO:0006099">
    <property type="term" value="P:tricarboxylic acid cycle"/>
    <property type="evidence" value="ECO:0007669"/>
    <property type="project" value="UniProtKB-UniPathway"/>
</dbReference>
<dbReference type="FunFam" id="3.90.700.10:FF:000001">
    <property type="entry name" value="Mitochondrial succinate dehydrogenase flavoprotein subunit"/>
    <property type="match status" value="1"/>
</dbReference>
<dbReference type="FunFam" id="4.10.80.40:FF:000004">
    <property type="entry name" value="Succinate dehydrogenase [ubiquinone] flavoprotein subunit, mitochondrial"/>
    <property type="match status" value="1"/>
</dbReference>
<dbReference type="FunFam" id="3.50.50.60:FF:000482">
    <property type="entry name" value="Succinate dehydrogenase complex, subunit A, flavoprotein (Fp)"/>
    <property type="match status" value="1"/>
</dbReference>
<dbReference type="FunFam" id="1.20.58.100:FF:000001">
    <property type="entry name" value="Succinate dehydrogenase flavoprotein subunit (SdhA)"/>
    <property type="match status" value="1"/>
</dbReference>
<dbReference type="Gene3D" id="3.50.50.60">
    <property type="entry name" value="FAD/NAD(P)-binding domain"/>
    <property type="match status" value="1"/>
</dbReference>
<dbReference type="Gene3D" id="1.20.58.100">
    <property type="entry name" value="Fumarate reductase/succinate dehydrogenase flavoprotein-like, C-terminal domain"/>
    <property type="match status" value="1"/>
</dbReference>
<dbReference type="Gene3D" id="4.10.80.40">
    <property type="entry name" value="succinate dehydrogenase protein domain"/>
    <property type="match status" value="1"/>
</dbReference>
<dbReference type="Gene3D" id="3.90.700.10">
    <property type="entry name" value="Succinate dehydrogenase/fumarate reductase flavoprotein, catalytic domain"/>
    <property type="match status" value="1"/>
</dbReference>
<dbReference type="InterPro" id="IPR003953">
    <property type="entry name" value="FAD-dep_OxRdtase_2_FAD-bd"/>
</dbReference>
<dbReference type="InterPro" id="IPR036188">
    <property type="entry name" value="FAD/NAD-bd_sf"/>
</dbReference>
<dbReference type="InterPro" id="IPR003952">
    <property type="entry name" value="FRD_SDH_FAD_BS"/>
</dbReference>
<dbReference type="InterPro" id="IPR037099">
    <property type="entry name" value="Fum_R/Succ_DH_flav-like_C_sf"/>
</dbReference>
<dbReference type="InterPro" id="IPR015939">
    <property type="entry name" value="Fum_Rdtase/Succ_DH_flav-like_C"/>
</dbReference>
<dbReference type="InterPro" id="IPR030664">
    <property type="entry name" value="SdhA/FrdA/AprA"/>
</dbReference>
<dbReference type="InterPro" id="IPR027477">
    <property type="entry name" value="Succ_DH/fumarate_Rdtase_cat_sf"/>
</dbReference>
<dbReference type="InterPro" id="IPR011281">
    <property type="entry name" value="Succ_DH_flav_su_fwd"/>
</dbReference>
<dbReference type="InterPro" id="IPR014006">
    <property type="entry name" value="Succ_Dhase_FrdA_Gneg"/>
</dbReference>
<dbReference type="NCBIfam" id="TIGR01816">
    <property type="entry name" value="sdhA_forward"/>
    <property type="match status" value="1"/>
</dbReference>
<dbReference type="NCBIfam" id="TIGR01812">
    <property type="entry name" value="sdhA_frdA_Gneg"/>
    <property type="match status" value="1"/>
</dbReference>
<dbReference type="PANTHER" id="PTHR11632">
    <property type="entry name" value="SUCCINATE DEHYDROGENASE 2 FLAVOPROTEIN SUBUNIT"/>
    <property type="match status" value="1"/>
</dbReference>
<dbReference type="PANTHER" id="PTHR11632:SF51">
    <property type="entry name" value="SUCCINATE DEHYDROGENASE [UBIQUINONE] FLAVOPROTEIN SUBUNIT, MITOCHONDRIAL"/>
    <property type="match status" value="1"/>
</dbReference>
<dbReference type="Pfam" id="PF00890">
    <property type="entry name" value="FAD_binding_2"/>
    <property type="match status" value="1"/>
</dbReference>
<dbReference type="Pfam" id="PF02910">
    <property type="entry name" value="Succ_DH_flav_C"/>
    <property type="match status" value="1"/>
</dbReference>
<dbReference type="PIRSF" id="PIRSF000171">
    <property type="entry name" value="SDHA_APRA_LASPO"/>
    <property type="match status" value="1"/>
</dbReference>
<dbReference type="SUPFAM" id="SSF51905">
    <property type="entry name" value="FAD/NAD(P)-binding domain"/>
    <property type="match status" value="1"/>
</dbReference>
<dbReference type="SUPFAM" id="SSF46977">
    <property type="entry name" value="Succinate dehydrogenase/fumarate reductase flavoprotein C-terminal domain"/>
    <property type="match status" value="1"/>
</dbReference>
<dbReference type="SUPFAM" id="SSF56425">
    <property type="entry name" value="Succinate dehydrogenase/fumarate reductase flavoprotein, catalytic domain"/>
    <property type="match status" value="1"/>
</dbReference>
<dbReference type="PROSITE" id="PS00504">
    <property type="entry name" value="FRD_SDH_FAD_BINDING"/>
    <property type="match status" value="1"/>
</dbReference>
<keyword id="KW-0249">Electron transport</keyword>
<keyword id="KW-0274">FAD</keyword>
<keyword id="KW-0285">Flavoprotein</keyword>
<keyword id="KW-0472">Membrane</keyword>
<keyword id="KW-0496">Mitochondrion</keyword>
<keyword id="KW-0999">Mitochondrion inner membrane</keyword>
<keyword id="KW-0560">Oxidoreductase</keyword>
<keyword id="KW-1185">Reference proteome</keyword>
<keyword id="KW-0809">Transit peptide</keyword>
<keyword id="KW-0813">Transport</keyword>
<keyword id="KW-0816">Tricarboxylic acid cycle</keyword>
<protein>
    <recommendedName>
        <fullName>Succinate dehydrogenase [ubiquinone] flavoprotein subunit, mitochondrial</fullName>
        <ecNumber evidence="1">1.3.5.1</ecNumber>
    </recommendedName>
    <alternativeName>
        <fullName>Flavoprotein subunit of complex II</fullName>
        <shortName>FP</shortName>
    </alternativeName>
</protein>
<accession>Q09508</accession>
<accession>Q17616</accession>
<accession>Q34089</accession>
<comment type="function">
    <text evidence="1">Flavoprotein (FP) subunit of succinate dehydrogenase (SDH) that is involved in complex II of the mitochondrial electron transport chain and is responsible for transferring electrons from succinate to ubiquinone (coenzyme Q).</text>
</comment>
<comment type="catalytic activity">
    <reaction evidence="1">
        <text>a quinone + succinate = fumarate + a quinol</text>
        <dbReference type="Rhea" id="RHEA:40523"/>
        <dbReference type="ChEBI" id="CHEBI:24646"/>
        <dbReference type="ChEBI" id="CHEBI:29806"/>
        <dbReference type="ChEBI" id="CHEBI:30031"/>
        <dbReference type="ChEBI" id="CHEBI:132124"/>
        <dbReference type="EC" id="1.3.5.1"/>
    </reaction>
</comment>
<comment type="cofactor">
    <cofactor evidence="2">
        <name>FAD</name>
        <dbReference type="ChEBI" id="CHEBI:57692"/>
    </cofactor>
</comment>
<comment type="pathway">
    <text evidence="1">Carbohydrate metabolism; tricarboxylic acid cycle; fumarate from succinate (eukaryal route): step 1/1.</text>
</comment>
<comment type="subunit">
    <text evidence="2">Component of complex II composed of four subunits: a flavoprotein (FP), an iron-sulfur protein (IP), and a cytochrome b composed of a large and a small subunit.</text>
</comment>
<comment type="subcellular location">
    <subcellularLocation>
        <location evidence="2">Mitochondrion inner membrane</location>
        <topology evidence="2">Peripheral membrane protein</topology>
        <orientation evidence="2">Matrix side</orientation>
    </subcellularLocation>
</comment>
<comment type="similarity">
    <text evidence="5">Belongs to the FAD-dependent oxidoreductase 2 family. FRD/SDH subfamily.</text>
</comment>
<feature type="transit peptide" description="Mitochondrion" evidence="4">
    <location>
        <begin position="1"/>
        <end position="31"/>
    </location>
</feature>
<feature type="chain" id="PRO_0000010339" description="Succinate dehydrogenase [ubiquinone] flavoprotein subunit, mitochondrial">
    <location>
        <begin position="32"/>
        <end position="646"/>
    </location>
</feature>
<feature type="active site" description="Proton acceptor" evidence="3">
    <location>
        <position position="321"/>
    </location>
</feature>
<feature type="binding site" evidence="3">
    <location>
        <begin position="49"/>
        <end position="54"/>
    </location>
    <ligand>
        <name>FAD</name>
        <dbReference type="ChEBI" id="CHEBI:57692"/>
    </ligand>
</feature>
<feature type="binding site" evidence="3">
    <location>
        <begin position="72"/>
        <end position="87"/>
    </location>
    <ligand>
        <name>FAD</name>
        <dbReference type="ChEBI" id="CHEBI:57692"/>
    </ligand>
</feature>
<feature type="binding site" evidence="3">
    <location>
        <position position="256"/>
    </location>
    <ligand>
        <name>FAD</name>
        <dbReference type="ChEBI" id="CHEBI:57692"/>
    </ligand>
</feature>
<feature type="binding site" evidence="3">
    <location>
        <position position="277"/>
    </location>
    <ligand>
        <name>substrate</name>
    </ligand>
</feature>
<feature type="binding site" evidence="3">
    <location>
        <position position="289"/>
    </location>
    <ligand>
        <name>substrate</name>
    </ligand>
</feature>
<feature type="binding site" evidence="3">
    <location>
        <position position="388"/>
    </location>
    <ligand>
        <name>substrate</name>
    </ligand>
</feature>
<feature type="binding site" evidence="3">
    <location>
        <position position="422"/>
    </location>
    <ligand>
        <name>FAD</name>
        <dbReference type="ChEBI" id="CHEBI:57692"/>
    </ligand>
</feature>
<feature type="binding site" evidence="3">
    <location>
        <position position="433"/>
    </location>
    <ligand>
        <name>substrate</name>
    </ligand>
</feature>
<feature type="binding site" evidence="3">
    <location>
        <begin position="438"/>
        <end position="439"/>
    </location>
    <ligand>
        <name>FAD</name>
        <dbReference type="ChEBI" id="CHEBI:57692"/>
    </ligand>
</feature>
<feature type="modified residue" description="Tele-8alpha-FAD histidine" evidence="3">
    <location>
        <position position="80"/>
    </location>
</feature>
<feature type="sequence conflict" description="In Ref. 1; BAA21637." evidence="5" ref="1">
    <original>G</original>
    <variation>E</variation>
    <location>
        <position position="64"/>
    </location>
</feature>
<feature type="sequence conflict" description="In Ref. 1; BAA21637." evidence="5" ref="1">
    <original>N</original>
    <variation>S</variation>
    <location>
        <position position="267"/>
    </location>
</feature>
<feature type="sequence conflict" description="In Ref. 1; BAA21637." evidence="5" ref="1">
    <original>A</original>
    <variation>S</variation>
    <location>
        <position position="303"/>
    </location>
</feature>
<feature type="sequence conflict" description="In Ref. 1; BAA21637." evidence="5" ref="1">
    <original>A</original>
    <variation>S</variation>
    <location>
        <position position="315"/>
    </location>
</feature>
<feature type="sequence conflict" description="In Ref. 1; BAA21637." evidence="5" ref="1">
    <original>V</original>
    <variation>G</variation>
    <location>
        <position position="463"/>
    </location>
</feature>
<feature type="sequence conflict" description="In Ref. 1; BAA21637." evidence="5" ref="1">
    <original>HNKG</original>
    <variation>TTRE</variation>
    <location>
        <begin position="483"/>
        <end position="486"/>
    </location>
</feature>
<feature type="sequence conflict" description="In Ref. 1; BAA21637." evidence="5" ref="1">
    <original>P</original>
    <variation>A</variation>
    <location>
        <position position="640"/>
    </location>
</feature>
<evidence type="ECO:0000250" key="1">
    <source>
        <dbReference type="UniProtKB" id="P31040"/>
    </source>
</evidence>
<evidence type="ECO:0000250" key="2">
    <source>
        <dbReference type="UniProtKB" id="Q0QF01"/>
    </source>
</evidence>
<evidence type="ECO:0000250" key="3">
    <source>
        <dbReference type="UniProtKB" id="Q9YHT1"/>
    </source>
</evidence>
<evidence type="ECO:0000255" key="4"/>
<evidence type="ECO:0000305" key="5"/>
<sequence>MLRAASNGLRNTVAARSVSLSAANHSDAKRSDIAQYKVVDHAYDAVVVGAGGAGLRAAMGLAEGGLKTAVITKLFPTRSHTVAAQGGINAALGNMNPDNWRWHFYDTVKGSDWLGDQDAIHYMTREAERAVIELENYGMPFSRTTDGKIYQRAFGGQSNDFGRGGQAHRTCCVADRTGHSLLHTLYGASLQYNCNYFVEYFALDLIMENGVCVGVIAMDLEDGTIHRFRSKNTVLATGGYGRAFFSCTSAHTCTGDGTALTARAGINNSDMEFVQFHPTGIYGAGCLITEGSRGEGGYLVNSAGERFMERYAPNAKDLASRDVVSRSMTVEIMEGRGVGPDKDHIYLQLHHLPAEQLQQRLPGISETAMIFAGVDVTKEPIPVIPTVHYNMGGVPTNYKGQVLNYTPKKGDEVVPGLYAAGECGAHSVHGANRLGANSLLDLVIFGRACAIDILKNTSAGVGVPELPKNAGEASVANIDKLRHNKGDISTAELRLTMQKSMQNHAAVFRRGDILKEGVKVLSKLYKDQAHLNVADKGLVWNSDLIETLELQNLLINATQTIVAAENREESRGAHARDDFPDRLDELDYSKPLEGQTKKELKDHWRKHSIIRSNIETGEVSLDYRPVIDTTLDKSETDWVPPKVRSY</sequence>
<reference key="1">
    <citation type="journal article" date="1994" name="Mol. Biochem. Parasitol.">
        <title>Sequence comparison between the flavoprotein subunit of the fumarate reductase (complex II) of the anaerobic parasitic nematode, Ascaris suum and the succinate dehydrogenase of the aerobic, free-living nematode, Caenorhabditis elegans.</title>
        <authorList>
            <person name="Kuramochi T."/>
            <person name="Hirawake H."/>
            <person name="Kojima S."/>
            <person name="Takamiya S."/>
            <person name="Furushima R."/>
            <person name="Aoki T."/>
            <person name="Komuniecki R."/>
            <person name="Kita K."/>
        </authorList>
    </citation>
    <scope>NUCLEOTIDE SEQUENCE [MRNA]</scope>
    <source>
        <strain>Bristol N2</strain>
    </source>
</reference>
<reference key="2">
    <citation type="journal article" date="1998" name="Science">
        <title>Genome sequence of the nematode C. elegans: a platform for investigating biology.</title>
        <authorList>
            <consortium name="The C. elegans sequencing consortium"/>
        </authorList>
    </citation>
    <scope>NUCLEOTIDE SEQUENCE [LARGE SCALE GENOMIC DNA]</scope>
    <source>
        <strain>Bristol N2</strain>
    </source>
</reference>
<proteinExistence type="evidence at transcript level"/>
<name>SDHA_CAEEL</name>
<gene>
    <name type="primary">sdha-1</name>
    <name type="ORF">C03G5.1/D2021.3</name>
</gene>
<organism>
    <name type="scientific">Caenorhabditis elegans</name>
    <dbReference type="NCBI Taxonomy" id="6239"/>
    <lineage>
        <taxon>Eukaryota</taxon>
        <taxon>Metazoa</taxon>
        <taxon>Ecdysozoa</taxon>
        <taxon>Nematoda</taxon>
        <taxon>Chromadorea</taxon>
        <taxon>Rhabditida</taxon>
        <taxon>Rhabditina</taxon>
        <taxon>Rhabditomorpha</taxon>
        <taxon>Rhabditoidea</taxon>
        <taxon>Rhabditidae</taxon>
        <taxon>Peloderinae</taxon>
        <taxon>Caenorhabditis</taxon>
    </lineage>
</organism>